<evidence type="ECO:0000250" key="1">
    <source>
        <dbReference type="UniProtKB" id="G3LSH3"/>
    </source>
</evidence>
<evidence type="ECO:0000250" key="2">
    <source>
        <dbReference type="UniProtKB" id="O22286"/>
    </source>
</evidence>
<evidence type="ECO:0000250" key="3">
    <source>
        <dbReference type="UniProtKB" id="Q9ZVC2"/>
    </source>
</evidence>
<evidence type="ECO:0000255" key="4"/>
<evidence type="ECO:0000255" key="5">
    <source>
        <dbReference type="PROSITE-ProRule" id="PRU00037"/>
    </source>
</evidence>
<evidence type="ECO:0000255" key="6">
    <source>
        <dbReference type="PROSITE-ProRule" id="PRU01391"/>
    </source>
</evidence>
<evidence type="ECO:0000256" key="7">
    <source>
        <dbReference type="SAM" id="MobiDB-lite"/>
    </source>
</evidence>
<evidence type="ECO:0000269" key="8">
    <source>
    </source>
</evidence>
<evidence type="ECO:0000269" key="9">
    <source>
    </source>
</evidence>
<evidence type="ECO:0000269" key="10">
    <source>
    </source>
</evidence>
<evidence type="ECO:0000269" key="11">
    <source>
    </source>
</evidence>
<evidence type="ECO:0000269" key="12">
    <source>
    </source>
</evidence>
<evidence type="ECO:0000269" key="13">
    <source>
    </source>
</evidence>
<evidence type="ECO:0000303" key="14">
    <source>
    </source>
</evidence>
<evidence type="ECO:0000305" key="15"/>
<evidence type="ECO:0000305" key="16">
    <source>
    </source>
</evidence>
<dbReference type="EMBL" id="JN180860">
    <property type="protein sequence ID" value="AET34790.1"/>
    <property type="molecule type" value="Genomic_DNA"/>
</dbReference>
<dbReference type="EMBL" id="JN180861">
    <property type="protein sequence ID" value="AET34791.1"/>
    <property type="molecule type" value="mRNA"/>
</dbReference>
<dbReference type="EMBL" id="JN180862">
    <property type="protein sequence ID" value="AET34792.1"/>
    <property type="molecule type" value="Genomic_DNA"/>
</dbReference>
<dbReference type="SMR" id="G8GTN7"/>
<dbReference type="OrthoDB" id="45365at2759"/>
<dbReference type="UniPathway" id="UPA00143"/>
<dbReference type="GO" id="GO:0005737">
    <property type="term" value="C:cytoplasm"/>
    <property type="evidence" value="ECO:0007669"/>
    <property type="project" value="UniProtKB-SubCell"/>
</dbReference>
<dbReference type="GO" id="GO:0005634">
    <property type="term" value="C:nucleus"/>
    <property type="evidence" value="ECO:0007669"/>
    <property type="project" value="UniProtKB-SubCell"/>
</dbReference>
<dbReference type="GO" id="GO:0005886">
    <property type="term" value="C:plasma membrane"/>
    <property type="evidence" value="ECO:0007669"/>
    <property type="project" value="UniProtKB-SubCell"/>
</dbReference>
<dbReference type="GO" id="GO:0000976">
    <property type="term" value="F:transcription cis-regulatory region binding"/>
    <property type="evidence" value="ECO:0007669"/>
    <property type="project" value="TreeGrafter"/>
</dbReference>
<dbReference type="GO" id="GO:0008270">
    <property type="term" value="F:zinc ion binding"/>
    <property type="evidence" value="ECO:0007669"/>
    <property type="project" value="UniProtKB-KW"/>
</dbReference>
<dbReference type="GO" id="GO:0009908">
    <property type="term" value="P:flower development"/>
    <property type="evidence" value="ECO:0000315"/>
    <property type="project" value="UniProtKB"/>
</dbReference>
<dbReference type="GO" id="GO:0009864">
    <property type="term" value="P:induced systemic resistance, jasmonic acid mediated signaling pathway"/>
    <property type="evidence" value="ECO:0007669"/>
    <property type="project" value="TreeGrafter"/>
</dbReference>
<dbReference type="GO" id="GO:0048366">
    <property type="term" value="P:leaf development"/>
    <property type="evidence" value="ECO:0000315"/>
    <property type="project" value="UniProtKB"/>
</dbReference>
<dbReference type="GO" id="GO:0009877">
    <property type="term" value="P:nodulation"/>
    <property type="evidence" value="ECO:0007669"/>
    <property type="project" value="UniProtKB-KW"/>
</dbReference>
<dbReference type="GO" id="GO:0006355">
    <property type="term" value="P:regulation of DNA-templated transcription"/>
    <property type="evidence" value="ECO:0007669"/>
    <property type="project" value="TreeGrafter"/>
</dbReference>
<dbReference type="GO" id="GO:0010865">
    <property type="term" value="P:stipule development"/>
    <property type="evidence" value="ECO:0000315"/>
    <property type="project" value="UniProtKB"/>
</dbReference>
<dbReference type="CDD" id="cd18310">
    <property type="entry name" value="BTB_POZ_NPR_plant"/>
    <property type="match status" value="1"/>
</dbReference>
<dbReference type="FunFam" id="3.30.710.10:FF:000084">
    <property type="entry name" value="regulatory protein NPR5 isoform X1"/>
    <property type="match status" value="1"/>
</dbReference>
<dbReference type="FunFam" id="1.25.40.20:FF:000058">
    <property type="entry name" value="regulatory protein NPR5 isoform X2"/>
    <property type="match status" value="1"/>
</dbReference>
<dbReference type="Gene3D" id="1.25.40.20">
    <property type="entry name" value="Ankyrin repeat-containing domain"/>
    <property type="match status" value="1"/>
</dbReference>
<dbReference type="Gene3D" id="3.30.710.10">
    <property type="entry name" value="Potassium Channel Kv1.1, Chain A"/>
    <property type="match status" value="1"/>
</dbReference>
<dbReference type="InterPro" id="IPR002110">
    <property type="entry name" value="Ankyrin_rpt"/>
</dbReference>
<dbReference type="InterPro" id="IPR036770">
    <property type="entry name" value="Ankyrin_rpt-contain_sf"/>
</dbReference>
<dbReference type="InterPro" id="IPR000210">
    <property type="entry name" value="BTB/POZ_dom"/>
</dbReference>
<dbReference type="InterPro" id="IPR044284">
    <property type="entry name" value="NPR5/6"/>
</dbReference>
<dbReference type="InterPro" id="IPR024228">
    <property type="entry name" value="NPR_central_dom"/>
</dbReference>
<dbReference type="InterPro" id="IPR011333">
    <property type="entry name" value="SKP1/BTB/POZ_sf"/>
</dbReference>
<dbReference type="PANTHER" id="PTHR46668">
    <property type="entry name" value="BTB/POZ DOMAIN AND ANKYRIN REPEAT-CONTAINING PROTEIN NH5.2"/>
    <property type="match status" value="1"/>
</dbReference>
<dbReference type="PANTHER" id="PTHR46668:SF1">
    <property type="entry name" value="REGULATORY PROTEIN NPR5"/>
    <property type="match status" value="1"/>
</dbReference>
<dbReference type="Pfam" id="PF12796">
    <property type="entry name" value="Ank_2"/>
    <property type="match status" value="1"/>
</dbReference>
<dbReference type="Pfam" id="PF00651">
    <property type="entry name" value="BTB"/>
    <property type="match status" value="1"/>
</dbReference>
<dbReference type="Pfam" id="PF11900">
    <property type="entry name" value="DUF3420"/>
    <property type="match status" value="1"/>
</dbReference>
<dbReference type="SMART" id="SM00248">
    <property type="entry name" value="ANK"/>
    <property type="match status" value="2"/>
</dbReference>
<dbReference type="SMART" id="SM00225">
    <property type="entry name" value="BTB"/>
    <property type="match status" value="1"/>
</dbReference>
<dbReference type="SUPFAM" id="SSF48403">
    <property type="entry name" value="Ankyrin repeat"/>
    <property type="match status" value="1"/>
</dbReference>
<dbReference type="SUPFAM" id="SSF54695">
    <property type="entry name" value="POZ domain"/>
    <property type="match status" value="1"/>
</dbReference>
<dbReference type="PROSITE" id="PS50297">
    <property type="entry name" value="ANK_REP_REGION"/>
    <property type="match status" value="1"/>
</dbReference>
<dbReference type="PROSITE" id="PS50088">
    <property type="entry name" value="ANK_REPEAT"/>
    <property type="match status" value="1"/>
</dbReference>
<dbReference type="PROSITE" id="PS50097">
    <property type="entry name" value="BTB"/>
    <property type="match status" value="1"/>
</dbReference>
<dbReference type="PROSITE" id="PS52046">
    <property type="entry name" value="ZF_C2HC_NPR"/>
    <property type="match status" value="1"/>
</dbReference>
<organism>
    <name type="scientific">Pisum sativum</name>
    <name type="common">Garden pea</name>
    <name type="synonym">Lathyrus oleraceus</name>
    <dbReference type="NCBI Taxonomy" id="3888"/>
    <lineage>
        <taxon>Eukaryota</taxon>
        <taxon>Viridiplantae</taxon>
        <taxon>Streptophyta</taxon>
        <taxon>Embryophyta</taxon>
        <taxon>Tracheophyta</taxon>
        <taxon>Spermatophyta</taxon>
        <taxon>Magnoliopsida</taxon>
        <taxon>eudicotyledons</taxon>
        <taxon>Gunneridae</taxon>
        <taxon>Pentapetalae</taxon>
        <taxon>rosids</taxon>
        <taxon>fabids</taxon>
        <taxon>Fabales</taxon>
        <taxon>Fabaceae</taxon>
        <taxon>Papilionoideae</taxon>
        <taxon>50 kb inversion clade</taxon>
        <taxon>NPAAA clade</taxon>
        <taxon>Hologalegina</taxon>
        <taxon>IRL clade</taxon>
        <taxon>Fabeae</taxon>
        <taxon>Pisum</taxon>
    </lineage>
</organism>
<name>COCH_PEA</name>
<sequence>MSLEDSLRSLSLDYLNLLINGQAFSDVVFSVEGRLVHAHRCILAARSLFFRKFFCGPDPPSGLDPSGNRVNSSTRSGVIPVNSVGYEVFLLMLQFLYSGQVSIVPQKHEPRPNCGDRGCWHTHCTSAVDLALDTLSAARYFGVEQLALLTQKQLASMVEKASIEDVMKVLLASRKQDMHQLWTTCSHLVAKSGLPPEVLAKHLPIDIIAKIEELRMKSSLSRRSLIPHHHHNPHHHHDHLTAAADLEDQKIRRMRRALDSSDVELVKLMVMGEGLNLDEALALPYAVESCSREVVKALLELGAADVNFPAGPTGKTPLHIAAEMVSPDMVAVLLDHHADPNVRTVDGVTPLDILRTLTSDFLFKGAVPGLTHIEPNKLRLCLELVQSAALVMSREEGNNNNNANNNNTGSSATNMYPHNHMNEEHHSHHNNNSNMDSRLVYLNLGANTQMSTSRLDSGDDDHNSNQREAMNPSMYHHHHSHDY</sequence>
<proteinExistence type="evidence at transcript level"/>
<reference key="1">
    <citation type="journal article" date="2012" name="Plant Cell">
        <title>NODULE ROOT and COCHLEATA maintain nodule development and are legume orthologs of Arabidopsis BLADE-ON-PETIOLE genes.</title>
        <authorList>
            <person name="Couzigou J.-M."/>
            <person name="Zhukov V."/>
            <person name="Mondy S."/>
            <person name="Abu El Heba G."/>
            <person name="Cosson V."/>
            <person name="Ellis T.H.N."/>
            <person name="Ambrose M."/>
            <person name="Wen J."/>
            <person name="Tadege M."/>
            <person name="Tikhonovich I."/>
            <person name="Mysore K.S."/>
            <person name="Putterill J."/>
            <person name="Hofer J."/>
            <person name="Borisov A.Y."/>
            <person name="Ratet P."/>
        </authorList>
    </citation>
    <scope>NUCLEOTIDE SEQUENCE [GENOMIC DNA / MRNA]</scope>
    <scope>FUNCTION</scope>
    <scope>DISRUPTION PHENOTYPE</scope>
</reference>
<reference key="2">
    <citation type="journal article" date="2000" name="Plant Cell">
        <title>Pea compound leaf architecture is regulated by interactions among the genes UNIFOLIATA, cochleata, afila, and tendril-lessn.</title>
        <authorList>
            <person name="Gourlay C.W."/>
            <person name="Hofer J.M."/>
            <person name="Ellis T.H."/>
        </authorList>
    </citation>
    <scope>FUNCTION</scope>
    <scope>DISRUPTION PHENOTYPE</scope>
</reference>
<reference key="3">
    <citation type="journal article" date="2005" name="Plant Cell Physiol.">
        <title>Cochleata: getting to the root of legume nodules.</title>
        <authorList>
            <person name="Ferguson B.J."/>
            <person name="Reid J.B."/>
        </authorList>
    </citation>
    <scope>FUNCTION</scope>
    <scope>DISRUPTION PHENOTYPE</scope>
</reference>
<reference key="4">
    <citation type="journal article" date="2009" name="Planta">
        <title>Regulation of stipule development by COCHLEATA and STIPULE-REDUCED genes in pea Pisum sativum.</title>
        <authorList>
            <person name="Kumar S."/>
            <person name="Mishra R.K."/>
            <person name="Kumar A."/>
            <person name="Srivastava S."/>
            <person name="Chaudhary S."/>
        </authorList>
    </citation>
    <scope>FUNCTION</scope>
    <scope>DISRUPTION PHENOTYPE</scope>
</reference>
<reference key="5">
    <citation type="journal article" date="2012" name="J. Biosci.">
        <title>COCHLEATA controls leaf size and secondary inflorescence architecture via negative regulation of UNIFOLIATA (LEAFY ortholog) gene in garden pea Pisum sativum.</title>
        <authorList>
            <person name="Sharma V."/>
            <person name="Chaudhary S."/>
            <person name="Kumar A."/>
            <person name="Kumar S."/>
        </authorList>
    </citation>
    <scope>FUNCTION</scope>
</reference>
<reference key="6">
    <citation type="journal article" date="2016" name="New Phytol.">
        <title>The legume NOOT-BOP-COCH-LIKE genes are conserved regulators of abscission, a major agronomical trait in cultivated crops.</title>
        <authorList>
            <person name="Couzigou J.-M."/>
            <person name="Magne K."/>
            <person name="Mondy S."/>
            <person name="Cosson V."/>
            <person name="Clements J."/>
            <person name="Ratet P."/>
        </authorList>
    </citation>
    <scope>FUNCTION</scope>
    <scope>DISRUPTION PHENOTYPE</scope>
    <source>
        <strain>cv. Weitor</strain>
    </source>
</reference>
<keyword id="KW-0040">ANK repeat</keyword>
<keyword id="KW-1003">Cell membrane</keyword>
<keyword id="KW-0963">Cytoplasm</keyword>
<keyword id="KW-0472">Membrane</keyword>
<keyword id="KW-0479">Metal-binding</keyword>
<keyword id="KW-0536">Nodulation</keyword>
<keyword id="KW-0539">Nucleus</keyword>
<keyword id="KW-0677">Repeat</keyword>
<keyword id="KW-0833">Ubl conjugation pathway</keyword>
<keyword id="KW-0862">Zinc</keyword>
<keyword id="KW-0863">Zinc-finger</keyword>
<feature type="chain" id="PRO_0000445729" description="BTB/POZ domain and ankyrin repeat-containing protein COCH">
    <location>
        <begin position="1"/>
        <end position="483"/>
    </location>
</feature>
<feature type="domain" description="BTB" evidence="5">
    <location>
        <begin position="25"/>
        <end position="105"/>
    </location>
</feature>
<feature type="repeat" description="ANK 1" evidence="4">
    <location>
        <begin position="249"/>
        <end position="278"/>
    </location>
</feature>
<feature type="repeat" description="ANK 2" evidence="4">
    <location>
        <begin position="279"/>
        <end position="308"/>
    </location>
</feature>
<feature type="repeat" description="ANK 3" evidence="4">
    <location>
        <begin position="313"/>
        <end position="342"/>
    </location>
</feature>
<feature type="repeat" description="ANK 4" evidence="15">
    <location>
        <begin position="346"/>
        <end position="380"/>
    </location>
</feature>
<feature type="zinc finger region" description="C2HC NPR-type" evidence="6">
    <location>
        <begin position="111"/>
        <end position="125"/>
    </location>
</feature>
<feature type="region of interest" description="Disordered" evidence="7">
    <location>
        <begin position="395"/>
        <end position="435"/>
    </location>
</feature>
<feature type="region of interest" description="Disordered" evidence="7">
    <location>
        <begin position="450"/>
        <end position="483"/>
    </location>
</feature>
<feature type="compositionally biased region" description="Low complexity" evidence="7">
    <location>
        <begin position="398"/>
        <end position="414"/>
    </location>
</feature>
<feature type="compositionally biased region" description="Basic and acidic residues" evidence="7">
    <location>
        <begin position="456"/>
        <end position="465"/>
    </location>
</feature>
<feature type="binding site" evidence="6">
    <location>
        <position position="114"/>
    </location>
    <ligand>
        <name>Zn(2+)</name>
        <dbReference type="ChEBI" id="CHEBI:29105"/>
    </ligand>
</feature>
<feature type="binding site" evidence="6">
    <location>
        <position position="119"/>
    </location>
    <ligand>
        <name>Zn(2+)</name>
        <dbReference type="ChEBI" id="CHEBI:29105"/>
    </ligand>
</feature>
<feature type="binding site" evidence="6">
    <location>
        <position position="121"/>
    </location>
    <ligand>
        <name>Zn(2+)</name>
        <dbReference type="ChEBI" id="CHEBI:29105"/>
    </ligand>
</feature>
<feature type="binding site" evidence="6">
    <location>
        <position position="124"/>
    </location>
    <ligand>
        <name>Zn(2+)</name>
        <dbReference type="ChEBI" id="CHEBI:29105"/>
    </ligand>
</feature>
<feature type="sequence conflict" description="In Ref. 1; AET34792." evidence="15" ref="1">
    <original>S</original>
    <variation>F</variation>
    <location>
        <position position="387"/>
    </location>
</feature>
<protein>
    <recommendedName>
        <fullName evidence="15">BTB/POZ domain and ankyrin repeat-containing protein COCH</fullName>
    </recommendedName>
    <alternativeName>
        <fullName evidence="14">Protein COCHLEATA</fullName>
    </alternativeName>
</protein>
<accession>G8GTN7</accession>
<accession>G8GTN8</accession>
<gene>
    <name evidence="14" type="primary">COCH</name>
</gene>
<comment type="function">
    <text evidence="1 2 8 9 10 11 12 13">May act as a substrate-specific adapter of an E3 ubiquitin-protein ligase complex (CUL3-RBX1-BTB) which mediates the ubiquitination and subsequent proteasomal degradation of target proteins (By similarity). Transcriptional co-regulator involved in the promotion of leaf and floral meristem fate and determinacy (PubMed:23136374, PubMed:23151794). Promotes normal stipule growth and development (PubMed:10948249, PubMed:19488780, PubMed:23136374). Required for the abscission of senescent organs, probably by regulating the cell wall disorganization in abscission zones (AZs, e.g. pulvini at the base of leaves) (PubMed:26390061). Down-regulates UNI expression in primordia of leaves and secondary inflorescences, and thereby controls their sizes and/or structures (PubMed:23151794). Involved in the coordination of the symbiotic nodule developmental program (PubMed:16043431). Promotes the formation of root nodules by interacting directly with APP1 to modulate the expression of the nuclear transcription factor Y subunit (NF-YA1), a key nodulin (By similarity). Necessary for the robust maintenance of nodule identity throughout the nodule developmental program (PubMed:16043431).</text>
</comment>
<comment type="pathway">
    <text evidence="2">Protein modification; protein ubiquitination.</text>
</comment>
<comment type="subunit">
    <text evidence="3">Homodimer.</text>
</comment>
<comment type="subcellular location">
    <subcellularLocation>
        <location evidence="1">Nucleus</location>
    </subcellularLocation>
    <subcellularLocation>
        <location evidence="1">Cytoplasm</location>
    </subcellularLocation>
    <subcellularLocation>
        <location evidence="1">Cell membrane</location>
        <topology evidence="1">Peripheral membrane protein</topology>
        <orientation evidence="1">Cytoplasmic side</orientation>
    </subcellularLocation>
</comment>
<comment type="domain">
    <text evidence="2">The BTB/POZ domain mediates the interaction with some component of ubiquitin ligase complexes.</text>
</comment>
<comment type="disruption phenotype">
    <text evidence="8 9 10 11 13">Altered morphology of stipules (PubMed:10948249, PubMed:19488780, PubMed:23136374). Altered morphology of flowers (PubMed:23136374). Production of abnormal nodules that develop roots from the apical part of the nodule (PubMed:16043431). Altered abscission of senescing leaflets and of petals in developing fruits, even after complete pod senescence (PubMed:26390061).</text>
</comment>
<comment type="miscellaneous">
    <text evidence="16">Fruit abscission does not occur in Lotus japonicus.</text>
</comment>
<comment type="similarity">
    <text evidence="15">Belongs to the plant 'ANKYRIN-BTB/POZ' family. 'NOOT-BOP-COCH-like' (NBCL) subfamily.</text>
</comment>